<gene>
    <name type="primary">araH</name>
    <name type="synonym">araZ</name>
</gene>
<evidence type="ECO:0000255" key="1"/>
<evidence type="ECO:0000305" key="2"/>
<proteinExistence type="inferred from homology"/>
<feature type="chain" id="PRO_0000418503" description="L-arabinose ABC transporter permease protein AraH">
    <location>
        <begin position="1"/>
        <end position="339"/>
    </location>
</feature>
<feature type="transmembrane region" description="Helical" evidence="1">
    <location>
        <begin position="35"/>
        <end position="55"/>
    </location>
</feature>
<feature type="transmembrane region" description="Helical" evidence="1">
    <location>
        <begin position="63"/>
        <end position="83"/>
    </location>
</feature>
<feature type="transmembrane region" description="Helical" evidence="1">
    <location>
        <begin position="88"/>
        <end position="108"/>
    </location>
</feature>
<feature type="transmembrane region" description="Helical" evidence="1">
    <location>
        <begin position="113"/>
        <end position="133"/>
    </location>
</feature>
<feature type="transmembrane region" description="Helical" evidence="1">
    <location>
        <begin position="138"/>
        <end position="158"/>
    </location>
</feature>
<feature type="transmembrane region" description="Helical" evidence="1">
    <location>
        <begin position="179"/>
        <end position="199"/>
    </location>
</feature>
<feature type="transmembrane region" description="Helical" evidence="1">
    <location>
        <begin position="204"/>
        <end position="224"/>
    </location>
</feature>
<feature type="transmembrane region" description="Helical" evidence="1">
    <location>
        <begin position="229"/>
        <end position="249"/>
    </location>
</feature>
<feature type="transmembrane region" description="Helical" evidence="1">
    <location>
        <begin position="275"/>
        <end position="295"/>
    </location>
</feature>
<feature type="transmembrane region" description="Helical" evidence="1">
    <location>
        <begin position="306"/>
        <end position="326"/>
    </location>
</feature>
<name>ARAH_AZOBR</name>
<dbReference type="EMBL" id="AB241136">
    <property type="protein sequence ID" value="BAE94274.1"/>
    <property type="molecule type" value="Genomic_DNA"/>
</dbReference>
<dbReference type="GO" id="GO:0005886">
    <property type="term" value="C:plasma membrane"/>
    <property type="evidence" value="ECO:0007669"/>
    <property type="project" value="UniProtKB-SubCell"/>
</dbReference>
<dbReference type="GO" id="GO:0022857">
    <property type="term" value="F:transmembrane transporter activity"/>
    <property type="evidence" value="ECO:0007669"/>
    <property type="project" value="InterPro"/>
</dbReference>
<dbReference type="GO" id="GO:0042882">
    <property type="term" value="P:L-arabinose transmembrane transport"/>
    <property type="evidence" value="ECO:0000317"/>
    <property type="project" value="UniProtKB"/>
</dbReference>
<dbReference type="CDD" id="cd06579">
    <property type="entry name" value="TM_PBP1_transp_AraH_like"/>
    <property type="match status" value="1"/>
</dbReference>
<dbReference type="InterPro" id="IPR001851">
    <property type="entry name" value="ABC_transp_permease"/>
</dbReference>
<dbReference type="NCBIfam" id="NF008441">
    <property type="entry name" value="PRK11285.1"/>
    <property type="match status" value="1"/>
</dbReference>
<dbReference type="PANTHER" id="PTHR32196">
    <property type="entry name" value="ABC TRANSPORTER PERMEASE PROTEIN YPHD-RELATED-RELATED"/>
    <property type="match status" value="1"/>
</dbReference>
<dbReference type="PANTHER" id="PTHR32196:SF37">
    <property type="entry name" value="L-ARABINOSE TRANSPORT SYSTEM PERMEASE PROTEIN ARAH"/>
    <property type="match status" value="1"/>
</dbReference>
<dbReference type="Pfam" id="PF02653">
    <property type="entry name" value="BPD_transp_2"/>
    <property type="match status" value="1"/>
</dbReference>
<protein>
    <recommendedName>
        <fullName>L-arabinose ABC transporter permease protein AraH</fullName>
    </recommendedName>
</protein>
<keyword id="KW-0997">Cell inner membrane</keyword>
<keyword id="KW-1003">Cell membrane</keyword>
<keyword id="KW-0472">Membrane</keyword>
<keyword id="KW-0762">Sugar transport</keyword>
<keyword id="KW-0812">Transmembrane</keyword>
<keyword id="KW-1133">Transmembrane helix</keyword>
<keyword id="KW-0813">Transport</keyword>
<sequence length="339" mass="35372">MSQAMQPQRTSPSPDAAIAPARARGGVWQLINRSGIVMVFLVLFATLSLTVPDFLTPRNIQGLLLSVTLIGSIAVTMMFVLALGEVDLSVASIVAFSGVVASTLITATHSVVLGIAGGVLAGGAVGLVNGVLIARWRINSLIVTLAMMEVVRGLAFITSNGDAVMISEERFFDLGGGSFLGISYPIWSNIVGFVVFGFLLRKTVFGKNVLAVGGNGEAALLAGLPVMRIKITVFVLQGLVTGFAGVMLASRMSLGDPKTSVGLELGVISACVLGGVSLTGGVATISGVLVGVLIMGSVQDAMSLLNVPTFYQYLIRGGILLLAVLFDQYRRNQRRAMKI</sequence>
<organism>
    <name type="scientific">Azospirillum brasilense</name>
    <dbReference type="NCBI Taxonomy" id="192"/>
    <lineage>
        <taxon>Bacteria</taxon>
        <taxon>Pseudomonadati</taxon>
        <taxon>Pseudomonadota</taxon>
        <taxon>Alphaproteobacteria</taxon>
        <taxon>Rhodospirillales</taxon>
        <taxon>Azospirillaceae</taxon>
        <taxon>Azospirillum</taxon>
    </lineage>
</organism>
<accession>Q1JUP6</accession>
<reference key="1">
    <citation type="journal article" date="2006" name="J. Biol. Chem.">
        <title>Identification and characterization of L-arabonate dehydratase, L-2-keto-3-deoxyarabonate dehydratase and L-arabinolactonase involved in an alternative pathway of L-arabinose metabolism: novel evolutionary insight into sugar metabolism.</title>
        <authorList>
            <person name="Watanabe S."/>
            <person name="Shimada N."/>
            <person name="Tajima K."/>
            <person name="Kodaki T."/>
            <person name="Makino K."/>
        </authorList>
    </citation>
    <scope>NUCLEOTIDE SEQUENCE [GENOMIC DNA]</scope>
    <scope>PROBABLE FUNCTION</scope>
    <source>
        <strain>ATCC 29145 / DSM 1690 / IMET 11303 / Sp7</strain>
    </source>
</reference>
<comment type="function">
    <text evidence="2">Part of the ABC transporter complex AraFGH involved in L-arabinose import. Responsible for the translocation of the substrate across the membrane (Probable).</text>
</comment>
<comment type="subunit">
    <text evidence="2">The complex is composed of two ATP-binding proteins (AraG), two transmembrane proteins (AraH) and a solute-binding protein (AraF).</text>
</comment>
<comment type="subcellular location">
    <subcellularLocation>
        <location evidence="2">Cell inner membrane</location>
        <topology evidence="2">Multi-pass membrane protein</topology>
    </subcellularLocation>
</comment>
<comment type="similarity">
    <text evidence="2">Belongs to the binding-protein-dependent transport system permease family. AraH/RbsC subfamily.</text>
</comment>